<proteinExistence type="evidence at protein level"/>
<name>KILIN_HUMAN</name>
<sequence>MDRPGPGSARPGRTVHVWGYRVEWKVRNGRKLQPSEWAGRGDLGGFKRRWKDTRATVGTTFRRRSRVSLVGELSKFPLPSDSSGGKSSSSFARGALAWCRQRNPNPSCAAAETGARTSLPKERCRGWRLGNWLHKHPHPNTCPRLPACWLPPILTERGERVPKLVPLLACYPKSKPKD</sequence>
<gene>
    <name type="primary">KLLN</name>
</gene>
<organism>
    <name type="scientific">Homo sapiens</name>
    <name type="common">Human</name>
    <dbReference type="NCBI Taxonomy" id="9606"/>
    <lineage>
        <taxon>Eukaryota</taxon>
        <taxon>Metazoa</taxon>
        <taxon>Chordata</taxon>
        <taxon>Craniata</taxon>
        <taxon>Vertebrata</taxon>
        <taxon>Euteleostomi</taxon>
        <taxon>Mammalia</taxon>
        <taxon>Eutheria</taxon>
        <taxon>Euarchontoglires</taxon>
        <taxon>Primates</taxon>
        <taxon>Haplorrhini</taxon>
        <taxon>Catarrhini</taxon>
        <taxon>Hominidae</taxon>
        <taxon>Homo</taxon>
    </lineage>
</organism>
<reference key="1">
    <citation type="journal article" date="2008" name="Proc. Natl. Acad. Sci. U.S.A.">
        <title>Killin is a p53-regulated nuclear inhibitor of DNA synthesis.</title>
        <authorList>
            <person name="Cho Y.J."/>
            <person name="Liang P."/>
        </authorList>
    </citation>
    <scope>NUCLEOTIDE SEQUENCE [MRNA]</scope>
    <scope>FUNCTION</scope>
    <scope>SUBCELLULAR LOCATION</scope>
    <scope>DNA-BINDING</scope>
    <scope>INDUCTION</scope>
</reference>
<reference key="2">
    <citation type="journal article" date="2004" name="Nature">
        <title>The DNA sequence and comparative analysis of human chromosome 10.</title>
        <authorList>
            <person name="Deloukas P."/>
            <person name="Earthrowl M.E."/>
            <person name="Grafham D.V."/>
            <person name="Rubenfield M."/>
            <person name="French L."/>
            <person name="Steward C.A."/>
            <person name="Sims S.K."/>
            <person name="Jones M.C."/>
            <person name="Searle S."/>
            <person name="Scott C."/>
            <person name="Howe K."/>
            <person name="Hunt S.E."/>
            <person name="Andrews T.D."/>
            <person name="Gilbert J.G.R."/>
            <person name="Swarbreck D."/>
            <person name="Ashurst J.L."/>
            <person name="Taylor A."/>
            <person name="Battles J."/>
            <person name="Bird C.P."/>
            <person name="Ainscough R."/>
            <person name="Almeida J.P."/>
            <person name="Ashwell R.I.S."/>
            <person name="Ambrose K.D."/>
            <person name="Babbage A.K."/>
            <person name="Bagguley C.L."/>
            <person name="Bailey J."/>
            <person name="Banerjee R."/>
            <person name="Bates K."/>
            <person name="Beasley H."/>
            <person name="Bray-Allen S."/>
            <person name="Brown A.J."/>
            <person name="Brown J.Y."/>
            <person name="Burford D.C."/>
            <person name="Burrill W."/>
            <person name="Burton J."/>
            <person name="Cahill P."/>
            <person name="Camire D."/>
            <person name="Carter N.P."/>
            <person name="Chapman J.C."/>
            <person name="Clark S.Y."/>
            <person name="Clarke G."/>
            <person name="Clee C.M."/>
            <person name="Clegg S."/>
            <person name="Corby N."/>
            <person name="Coulson A."/>
            <person name="Dhami P."/>
            <person name="Dutta I."/>
            <person name="Dunn M."/>
            <person name="Faulkner L."/>
            <person name="Frankish A."/>
            <person name="Frankland J.A."/>
            <person name="Garner P."/>
            <person name="Garnett J."/>
            <person name="Gribble S."/>
            <person name="Griffiths C."/>
            <person name="Grocock R."/>
            <person name="Gustafson E."/>
            <person name="Hammond S."/>
            <person name="Harley J.L."/>
            <person name="Hart E."/>
            <person name="Heath P.D."/>
            <person name="Ho T.P."/>
            <person name="Hopkins B."/>
            <person name="Horne J."/>
            <person name="Howden P.J."/>
            <person name="Huckle E."/>
            <person name="Hynds C."/>
            <person name="Johnson C."/>
            <person name="Johnson D."/>
            <person name="Kana A."/>
            <person name="Kay M."/>
            <person name="Kimberley A.M."/>
            <person name="Kershaw J.K."/>
            <person name="Kokkinaki M."/>
            <person name="Laird G.K."/>
            <person name="Lawlor S."/>
            <person name="Lee H.M."/>
            <person name="Leongamornlert D.A."/>
            <person name="Laird G."/>
            <person name="Lloyd C."/>
            <person name="Lloyd D.M."/>
            <person name="Loveland J."/>
            <person name="Lovell J."/>
            <person name="McLaren S."/>
            <person name="McLay K.E."/>
            <person name="McMurray A."/>
            <person name="Mashreghi-Mohammadi M."/>
            <person name="Matthews L."/>
            <person name="Milne S."/>
            <person name="Nickerson T."/>
            <person name="Nguyen M."/>
            <person name="Overton-Larty E."/>
            <person name="Palmer S.A."/>
            <person name="Pearce A.V."/>
            <person name="Peck A.I."/>
            <person name="Pelan S."/>
            <person name="Phillimore B."/>
            <person name="Porter K."/>
            <person name="Rice C.M."/>
            <person name="Rogosin A."/>
            <person name="Ross M.T."/>
            <person name="Sarafidou T."/>
            <person name="Sehra H.K."/>
            <person name="Shownkeen R."/>
            <person name="Skuce C.D."/>
            <person name="Smith M."/>
            <person name="Standring L."/>
            <person name="Sycamore N."/>
            <person name="Tester J."/>
            <person name="Thorpe A."/>
            <person name="Torcasso W."/>
            <person name="Tracey A."/>
            <person name="Tromans A."/>
            <person name="Tsolas J."/>
            <person name="Wall M."/>
            <person name="Walsh J."/>
            <person name="Wang H."/>
            <person name="Weinstock K."/>
            <person name="West A.P."/>
            <person name="Willey D.L."/>
            <person name="Whitehead S.L."/>
            <person name="Wilming L."/>
            <person name="Wray P.W."/>
            <person name="Young L."/>
            <person name="Chen Y."/>
            <person name="Lovering R.C."/>
            <person name="Moschonas N.K."/>
            <person name="Siebert R."/>
            <person name="Fechtel K."/>
            <person name="Bentley D."/>
            <person name="Durbin R.M."/>
            <person name="Hubbard T."/>
            <person name="Doucette-Stamm L."/>
            <person name="Beck S."/>
            <person name="Smith D.R."/>
            <person name="Rogers J."/>
        </authorList>
    </citation>
    <scope>NUCLEOTIDE SEQUENCE [LARGE SCALE GENOMIC DNA]</scope>
</reference>
<reference key="3">
    <citation type="journal article" date="2010" name="JAMA">
        <title>Germline epigenetic regulation of KILLIN in Cowden and Cowden-like syndrome.</title>
        <authorList>
            <person name="Bennett K.L."/>
            <person name="Mester J."/>
            <person name="Eng C."/>
        </authorList>
    </citation>
    <scope>INVOLVEMENT IN CWS4</scope>
</reference>
<evidence type="ECO:0000269" key="1">
    <source>
    </source>
</evidence>
<evidence type="ECO:0000269" key="2">
    <source>
    </source>
</evidence>
<comment type="function">
    <text evidence="1">DNA-binding protein involved in S phase checkpoint control-coupled apoptosis by mediating p53/TP53-induced apoptosis. Has the ability to inhibit DNA synthesis and S phase arrest coupled to apoptosis. Has affinity to both double- and single-stranded DNA.</text>
</comment>
<comment type="subcellular location">
    <subcellularLocation>
        <location evidence="1">Nucleus</location>
    </subcellularLocation>
</comment>
<comment type="induction">
    <text evidence="1">By p53/TP53; direct transcription target of p53/TP53.</text>
</comment>
<comment type="disease" evidence="2">
    <disease id="DI-03695">
        <name>Cowden syndrome 4</name>
        <acronym>CWS4</acronym>
        <description>A form of Cowden syndrome, a hamartomatous polyposis syndrome with age-related penetrance. Cowden syndrome is characterized by hamartomatous lesions affecting derivatives of ectodermal, mesodermal and endodermal layers, macrocephaly, facial trichilemmomas (benign tumors of the hair follicle infundibulum), acral keratoses, papillomatous papules, and elevated risk for development of several types of malignancy, particularly breast carcinoma in women and thyroid carcinoma in both men and women. Colon cancer and renal cell carcinoma have also been reported. Hamartomas can be found in virtually every organ, but most commonly in the skin, gastrointestinal tract, breast and thyroid.</description>
        <dbReference type="MIM" id="615107"/>
    </disease>
    <text evidence="2">The gene represented in this entry is involved in disease pathogenesis. Germline KLLN methylation is common among patients with Cowden syndrome or Cowden-like syndrome and is associated with increased risks of breast and renal cancer over PTEN mutation-positive individuals (PubMed:21177507).</text>
</comment>
<dbReference type="EMBL" id="EU552092">
    <property type="protein sequence ID" value="ACB45456.1"/>
    <property type="molecule type" value="mRNA"/>
</dbReference>
<dbReference type="EMBL" id="AC063965">
    <property type="status" value="NOT_ANNOTATED_CDS"/>
    <property type="molecule type" value="Genomic_DNA"/>
</dbReference>
<dbReference type="CCDS" id="CCDS44454.1"/>
<dbReference type="RefSeq" id="NP_001119521.1">
    <property type="nucleotide sequence ID" value="NM_001126049.2"/>
</dbReference>
<dbReference type="BioGRID" id="936700">
    <property type="interactions" value="3"/>
</dbReference>
<dbReference type="FunCoup" id="B2CW77">
    <property type="interactions" value="58"/>
</dbReference>
<dbReference type="STRING" id="9606.ENSP00000392204"/>
<dbReference type="iPTMnet" id="B2CW77"/>
<dbReference type="PhosphoSitePlus" id="B2CW77"/>
<dbReference type="BioMuta" id="KLLN"/>
<dbReference type="PaxDb" id="9606-ENSP00000392204"/>
<dbReference type="Antibodypedia" id="58045">
    <property type="antibodies" value="122 antibodies from 18 providers"/>
</dbReference>
<dbReference type="DNASU" id="100144748"/>
<dbReference type="Ensembl" id="ENST00000445946.5">
    <property type="protein sequence ID" value="ENSP00000392204.2"/>
    <property type="gene ID" value="ENSG00000227268.5"/>
</dbReference>
<dbReference type="Ensembl" id="ENST00000635224.2">
    <property type="protein sequence ID" value="ENSP00000489239.1"/>
    <property type="gene ID" value="ENSG00000283059.3"/>
</dbReference>
<dbReference type="Ensembl" id="ENST00000644082.1">
    <property type="protein sequence ID" value="ENSP00000495113.1"/>
    <property type="gene ID" value="ENSG00000283059.3"/>
</dbReference>
<dbReference type="GeneID" id="100144748"/>
<dbReference type="KEGG" id="hsa:100144748"/>
<dbReference type="MANE-Select" id="ENST00000445946.5">
    <property type="protein sequence ID" value="ENSP00000392204.2"/>
    <property type="RefSeq nucleotide sequence ID" value="NM_001126049.2"/>
    <property type="RefSeq protein sequence ID" value="NP_001119521.1"/>
</dbReference>
<dbReference type="UCSC" id="uc009xti.3">
    <property type="organism name" value="human"/>
</dbReference>
<dbReference type="AGR" id="HGNC:37212"/>
<dbReference type="CTD" id="100144748"/>
<dbReference type="DisGeNET" id="100144748"/>
<dbReference type="GeneCards" id="KLLN"/>
<dbReference type="HGNC" id="HGNC:37212">
    <property type="gene designation" value="KLLN"/>
</dbReference>
<dbReference type="HPA" id="ENSG00000227268">
    <property type="expression patterns" value="Tissue enhanced (skeletal)"/>
</dbReference>
<dbReference type="MalaCards" id="KLLN"/>
<dbReference type="MIM" id="612105">
    <property type="type" value="gene"/>
</dbReference>
<dbReference type="MIM" id="615107">
    <property type="type" value="phenotype"/>
</dbReference>
<dbReference type="neXtProt" id="NX_B2CW77"/>
<dbReference type="OpenTargets" id="ENSG00000227268"/>
<dbReference type="Orphanet" id="201">
    <property type="disease" value="Cowden syndrome"/>
</dbReference>
<dbReference type="Orphanet" id="227535">
    <property type="disease" value="Hereditary breast cancer"/>
</dbReference>
<dbReference type="VEuPathDB" id="HostDB:ENSG00000227268"/>
<dbReference type="eggNOG" id="ENOG502TDVM">
    <property type="taxonomic scope" value="Eukaryota"/>
</dbReference>
<dbReference type="GeneTree" id="ENSGT00560000078481"/>
<dbReference type="HOGENOM" id="CLU_129370_0_0_1"/>
<dbReference type="InParanoid" id="B2CW77"/>
<dbReference type="OMA" id="PACWLPP"/>
<dbReference type="OrthoDB" id="9630558at2759"/>
<dbReference type="PAN-GO" id="B2CW77">
    <property type="GO annotations" value="0 GO annotations based on evolutionary models"/>
</dbReference>
<dbReference type="PhylomeDB" id="B2CW77"/>
<dbReference type="PathwayCommons" id="B2CW77"/>
<dbReference type="SignaLink" id="B2CW77"/>
<dbReference type="BioGRID-ORCS" id="100144748">
    <property type="hits" value="13 hits in 1148 CRISPR screens"/>
</dbReference>
<dbReference type="GenomeRNAi" id="100144748"/>
<dbReference type="Pharos" id="B2CW77">
    <property type="development level" value="Tbio"/>
</dbReference>
<dbReference type="PRO" id="PR:B2CW77"/>
<dbReference type="Proteomes" id="UP000005640">
    <property type="component" value="Chromosome 10"/>
</dbReference>
<dbReference type="RNAct" id="B2CW77">
    <property type="molecule type" value="protein"/>
</dbReference>
<dbReference type="Bgee" id="ENSG00000227268">
    <property type="expression patterns" value="Expressed in male germ line stem cell (sensu Vertebrata) in testis and 118 other cell types or tissues"/>
</dbReference>
<dbReference type="GO" id="GO:0005730">
    <property type="term" value="C:nucleolus"/>
    <property type="evidence" value="ECO:0000314"/>
    <property type="project" value="HPA"/>
</dbReference>
<dbReference type="GO" id="GO:0005654">
    <property type="term" value="C:nucleoplasm"/>
    <property type="evidence" value="ECO:0000314"/>
    <property type="project" value="HPA"/>
</dbReference>
<dbReference type="GO" id="GO:0003677">
    <property type="term" value="F:DNA binding"/>
    <property type="evidence" value="ECO:0007669"/>
    <property type="project" value="UniProtKB-KW"/>
</dbReference>
<dbReference type="GO" id="GO:0006915">
    <property type="term" value="P:apoptotic process"/>
    <property type="evidence" value="ECO:0007669"/>
    <property type="project" value="UniProtKB-KW"/>
</dbReference>
<accession>B2CW77</accession>
<keyword id="KW-0053">Apoptosis</keyword>
<keyword id="KW-0131">Cell cycle</keyword>
<keyword id="KW-0238">DNA-binding</keyword>
<keyword id="KW-0539">Nucleus</keyword>
<keyword id="KW-1185">Reference proteome</keyword>
<feature type="chain" id="PRO_0000347059" description="Killin">
    <location>
        <begin position="1"/>
        <end position="178"/>
    </location>
</feature>
<feature type="DNA-binding region">
    <location>
        <begin position="8"/>
        <end position="50"/>
    </location>
</feature>
<protein>
    <recommendedName>
        <fullName>Killin</fullName>
    </recommendedName>
</protein>